<organism>
    <name type="scientific">Streptococcus agalactiae serotype V (strain ATCC BAA-611 / 2603 V/R)</name>
    <dbReference type="NCBI Taxonomy" id="208435"/>
    <lineage>
        <taxon>Bacteria</taxon>
        <taxon>Bacillati</taxon>
        <taxon>Bacillota</taxon>
        <taxon>Bacilli</taxon>
        <taxon>Lactobacillales</taxon>
        <taxon>Streptococcaceae</taxon>
        <taxon>Streptococcus</taxon>
    </lineage>
</organism>
<proteinExistence type="inferred from homology"/>
<feature type="chain" id="PRO_0000098477" description="Isoleucine--tRNA ligase">
    <location>
        <begin position="1"/>
        <end position="930"/>
    </location>
</feature>
<feature type="short sequence motif" description="'HIGH' region">
    <location>
        <begin position="57"/>
        <end position="67"/>
    </location>
</feature>
<feature type="short sequence motif" description="'KMSKS' region">
    <location>
        <begin position="595"/>
        <end position="599"/>
    </location>
</feature>
<feature type="binding site" evidence="1">
    <location>
        <position position="554"/>
    </location>
    <ligand>
        <name>L-isoleucyl-5'-AMP</name>
        <dbReference type="ChEBI" id="CHEBI:178002"/>
    </ligand>
</feature>
<feature type="binding site" evidence="1">
    <location>
        <position position="598"/>
    </location>
    <ligand>
        <name>ATP</name>
        <dbReference type="ChEBI" id="CHEBI:30616"/>
    </ligand>
</feature>
<protein>
    <recommendedName>
        <fullName evidence="1">Isoleucine--tRNA ligase</fullName>
        <ecNumber evidence="1">6.1.1.5</ecNumber>
    </recommendedName>
    <alternativeName>
        <fullName evidence="1">Isoleucyl-tRNA synthetase</fullName>
        <shortName evidence="1">IleRS</shortName>
    </alternativeName>
</protein>
<comment type="function">
    <text evidence="1">Catalyzes the attachment of isoleucine to tRNA(Ile). As IleRS can inadvertently accommodate and process structurally similar amino acids such as valine, to avoid such errors it has two additional distinct tRNA(Ile)-dependent editing activities. One activity is designated as 'pretransfer' editing and involves the hydrolysis of activated Val-AMP. The other activity is designated 'posttransfer' editing and involves deacylation of mischarged Val-tRNA(Ile).</text>
</comment>
<comment type="catalytic activity">
    <reaction evidence="1">
        <text>tRNA(Ile) + L-isoleucine + ATP = L-isoleucyl-tRNA(Ile) + AMP + diphosphate</text>
        <dbReference type="Rhea" id="RHEA:11060"/>
        <dbReference type="Rhea" id="RHEA-COMP:9666"/>
        <dbReference type="Rhea" id="RHEA-COMP:9695"/>
        <dbReference type="ChEBI" id="CHEBI:30616"/>
        <dbReference type="ChEBI" id="CHEBI:33019"/>
        <dbReference type="ChEBI" id="CHEBI:58045"/>
        <dbReference type="ChEBI" id="CHEBI:78442"/>
        <dbReference type="ChEBI" id="CHEBI:78528"/>
        <dbReference type="ChEBI" id="CHEBI:456215"/>
        <dbReference type="EC" id="6.1.1.5"/>
    </reaction>
</comment>
<comment type="subunit">
    <text evidence="1">Monomer.</text>
</comment>
<comment type="subcellular location">
    <subcellularLocation>
        <location evidence="1">Cytoplasm</location>
    </subcellularLocation>
</comment>
<comment type="domain">
    <text evidence="1">IleRS has two distinct active sites: one for aminoacylation and one for editing. The misactivated valine is translocated from the active site to the editing site, which sterically excludes the correctly activated isoleucine. The single editing site contains two valyl binding pockets, one specific for each substrate (Val-AMP or Val-tRNA(Ile)).</text>
</comment>
<comment type="similarity">
    <text evidence="1">Belongs to the class-I aminoacyl-tRNA synthetase family. IleS type 1 subfamily.</text>
</comment>
<dbReference type="EC" id="6.1.1.5" evidence="1"/>
<dbReference type="EMBL" id="AE009948">
    <property type="protein sequence ID" value="AAM99387.1"/>
    <property type="molecule type" value="Genomic_DNA"/>
</dbReference>
<dbReference type="RefSeq" id="NP_687515.1">
    <property type="nucleotide sequence ID" value="NC_004116.1"/>
</dbReference>
<dbReference type="RefSeq" id="WP_000768163.1">
    <property type="nucleotide sequence ID" value="NC_004116.1"/>
</dbReference>
<dbReference type="SMR" id="Q8E177"/>
<dbReference type="STRING" id="208435.SAG0485"/>
<dbReference type="KEGG" id="sag:SAG0485"/>
<dbReference type="PATRIC" id="fig|208435.3.peg.483"/>
<dbReference type="HOGENOM" id="CLU_001493_7_0_9"/>
<dbReference type="OrthoDB" id="9810365at2"/>
<dbReference type="Proteomes" id="UP000000821">
    <property type="component" value="Chromosome"/>
</dbReference>
<dbReference type="GO" id="GO:0005829">
    <property type="term" value="C:cytosol"/>
    <property type="evidence" value="ECO:0007669"/>
    <property type="project" value="TreeGrafter"/>
</dbReference>
<dbReference type="GO" id="GO:0002161">
    <property type="term" value="F:aminoacyl-tRNA deacylase activity"/>
    <property type="evidence" value="ECO:0007669"/>
    <property type="project" value="InterPro"/>
</dbReference>
<dbReference type="GO" id="GO:0005524">
    <property type="term" value="F:ATP binding"/>
    <property type="evidence" value="ECO:0007669"/>
    <property type="project" value="UniProtKB-UniRule"/>
</dbReference>
<dbReference type="GO" id="GO:0004822">
    <property type="term" value="F:isoleucine-tRNA ligase activity"/>
    <property type="evidence" value="ECO:0007669"/>
    <property type="project" value="UniProtKB-UniRule"/>
</dbReference>
<dbReference type="GO" id="GO:0000049">
    <property type="term" value="F:tRNA binding"/>
    <property type="evidence" value="ECO:0007669"/>
    <property type="project" value="InterPro"/>
</dbReference>
<dbReference type="GO" id="GO:0006428">
    <property type="term" value="P:isoleucyl-tRNA aminoacylation"/>
    <property type="evidence" value="ECO:0007669"/>
    <property type="project" value="UniProtKB-UniRule"/>
</dbReference>
<dbReference type="CDD" id="cd07960">
    <property type="entry name" value="Anticodon_Ia_Ile_BEm"/>
    <property type="match status" value="1"/>
</dbReference>
<dbReference type="CDD" id="cd00818">
    <property type="entry name" value="IleRS_core"/>
    <property type="match status" value="1"/>
</dbReference>
<dbReference type="FunFam" id="1.10.10.830:FF:000001">
    <property type="entry name" value="Isoleucine--tRNA ligase"/>
    <property type="match status" value="1"/>
</dbReference>
<dbReference type="FunFam" id="1.10.730.20:FF:000001">
    <property type="entry name" value="Isoleucine--tRNA ligase"/>
    <property type="match status" value="1"/>
</dbReference>
<dbReference type="FunFam" id="3.40.50.620:FF:000092">
    <property type="entry name" value="Isoleucine--tRNA ligase"/>
    <property type="match status" value="1"/>
</dbReference>
<dbReference type="FunFam" id="3.90.740.10:FF:000006">
    <property type="entry name" value="Isoleucine--tRNA ligase"/>
    <property type="match status" value="1"/>
</dbReference>
<dbReference type="Gene3D" id="1.10.730.20">
    <property type="match status" value="1"/>
</dbReference>
<dbReference type="Gene3D" id="3.40.50.620">
    <property type="entry name" value="HUPs"/>
    <property type="match status" value="2"/>
</dbReference>
<dbReference type="Gene3D" id="1.10.10.830">
    <property type="entry name" value="Ile-tRNA synthetase CP2 domain-like"/>
    <property type="match status" value="1"/>
</dbReference>
<dbReference type="HAMAP" id="MF_02002">
    <property type="entry name" value="Ile_tRNA_synth_type1"/>
    <property type="match status" value="1"/>
</dbReference>
<dbReference type="InterPro" id="IPR001412">
    <property type="entry name" value="aa-tRNA-synth_I_CS"/>
</dbReference>
<dbReference type="InterPro" id="IPR002300">
    <property type="entry name" value="aa-tRNA-synth_Ia"/>
</dbReference>
<dbReference type="InterPro" id="IPR033708">
    <property type="entry name" value="Anticodon_Ile_BEm"/>
</dbReference>
<dbReference type="InterPro" id="IPR002301">
    <property type="entry name" value="Ile-tRNA-ligase"/>
</dbReference>
<dbReference type="InterPro" id="IPR023585">
    <property type="entry name" value="Ile-tRNA-ligase_type1"/>
</dbReference>
<dbReference type="InterPro" id="IPR050081">
    <property type="entry name" value="Ile-tRNA_ligase"/>
</dbReference>
<dbReference type="InterPro" id="IPR013155">
    <property type="entry name" value="M/V/L/I-tRNA-synth_anticd-bd"/>
</dbReference>
<dbReference type="InterPro" id="IPR014729">
    <property type="entry name" value="Rossmann-like_a/b/a_fold"/>
</dbReference>
<dbReference type="InterPro" id="IPR009080">
    <property type="entry name" value="tRNAsynth_Ia_anticodon-bd"/>
</dbReference>
<dbReference type="InterPro" id="IPR009008">
    <property type="entry name" value="Val/Leu/Ile-tRNA-synth_edit"/>
</dbReference>
<dbReference type="NCBIfam" id="TIGR00392">
    <property type="entry name" value="ileS"/>
    <property type="match status" value="1"/>
</dbReference>
<dbReference type="PANTHER" id="PTHR42765:SF1">
    <property type="entry name" value="ISOLEUCINE--TRNA LIGASE, MITOCHONDRIAL"/>
    <property type="match status" value="1"/>
</dbReference>
<dbReference type="PANTHER" id="PTHR42765">
    <property type="entry name" value="SOLEUCYL-TRNA SYNTHETASE"/>
    <property type="match status" value="1"/>
</dbReference>
<dbReference type="Pfam" id="PF08264">
    <property type="entry name" value="Anticodon_1"/>
    <property type="match status" value="1"/>
</dbReference>
<dbReference type="Pfam" id="PF00133">
    <property type="entry name" value="tRNA-synt_1"/>
    <property type="match status" value="1"/>
</dbReference>
<dbReference type="PRINTS" id="PR00984">
    <property type="entry name" value="TRNASYNTHILE"/>
</dbReference>
<dbReference type="SUPFAM" id="SSF47323">
    <property type="entry name" value="Anticodon-binding domain of a subclass of class I aminoacyl-tRNA synthetases"/>
    <property type="match status" value="1"/>
</dbReference>
<dbReference type="SUPFAM" id="SSF52374">
    <property type="entry name" value="Nucleotidylyl transferase"/>
    <property type="match status" value="1"/>
</dbReference>
<dbReference type="SUPFAM" id="SSF50677">
    <property type="entry name" value="ValRS/IleRS/LeuRS editing domain"/>
    <property type="match status" value="1"/>
</dbReference>
<dbReference type="PROSITE" id="PS00178">
    <property type="entry name" value="AA_TRNA_LIGASE_I"/>
    <property type="match status" value="1"/>
</dbReference>
<sequence length="930" mass="104897">MKLKETLNLGQTAFPMRAGLPNKEPQWQEAWDQADIYKKRQALNEGKPAFHLHDGPPYANGNIHVGHALNKISKDIIVRSKSMSGFRAPYVPGWDTHGLPIEQVLAKKGVKRKEMDLAEYLEMCRDYALSQVDKQRDDFKRLGVSADWENPYITLTPDYEADQVRVFGAMADKGYIYRGAKPVYWSWSSESALAEAEIEYHDIDSTSLYYANKVKDGKGILDTDTYIVVWTTTPFTVTASRGLTVGPDMEYVVVVPVGSERKYLLAEVLVDSLAAKFGWENFEIVTHHTGKELNHIVTEHPWDTEVEELVILGDHVTTDSGTGIVHTAPGFGEDDYNVGIANGLDVVVTVDSRGLMMENAGPDFEGQFYDKVTPLVKEKLGDLLLASEVINHSYPFDWRTKKPIIWRAVPQWFASVSKFRQEILDEIEKTNFQPEWGKKRLYNMIRDRGDWVISRQRAWGVPLPIFYAEDGTAIMTKEVTDHVADLFAEYGSIVWWQRDAKDLLPAGYTHPGSPNGLFEKETDIMDVWFDSGSSWNGVMNARENLSYPADLYLEGSDQYRGWFNSSLITSVAVNGHAPYKAVLSQGFVLDGKGEKMSKSLGNTILPSDVEKQFGAEILRLWVTSVDSSNDVRISMDILKQTSETYRKIRNTLRFLIANTSDFNPKQDAVAYENLGAVDRYMTIKFNQVVDTINKAYAAYDFMAIYKAVVNFVTVDLSAFYLDFAKDVVYIEAANSPERRRMQTVFYDILVKLTKLLTPILPHTAEEIWSYLEHEEEEFVQLAEMPVAQTFSGQEEILEEWSAFMTLRTQAQKALEEARNAKVIGKSLEAHLTIYASQEVKTLLTALNSDIALLMIVSQLTIADEADKPADSVSFEGVAFTVEHAEGEVCERSRRIDPTTKMRSYGVAVCDASAAIIEQYYPEAVAQGFEA</sequence>
<gene>
    <name evidence="1" type="primary">ileS</name>
    <name type="ordered locus">SAG0485</name>
</gene>
<reference key="1">
    <citation type="journal article" date="2002" name="Proc. Natl. Acad. Sci. U.S.A.">
        <title>Complete genome sequence and comparative genomic analysis of an emerging human pathogen, serotype V Streptococcus agalactiae.</title>
        <authorList>
            <person name="Tettelin H."/>
            <person name="Masignani V."/>
            <person name="Cieslewicz M.J."/>
            <person name="Eisen J.A."/>
            <person name="Peterson S.N."/>
            <person name="Wessels M.R."/>
            <person name="Paulsen I.T."/>
            <person name="Nelson K.E."/>
            <person name="Margarit I."/>
            <person name="Read T.D."/>
            <person name="Madoff L.C."/>
            <person name="Wolf A.M."/>
            <person name="Beanan M.J."/>
            <person name="Brinkac L.M."/>
            <person name="Daugherty S.C."/>
            <person name="DeBoy R.T."/>
            <person name="Durkin A.S."/>
            <person name="Kolonay J.F."/>
            <person name="Madupu R."/>
            <person name="Lewis M.R."/>
            <person name="Radune D."/>
            <person name="Fedorova N.B."/>
            <person name="Scanlan D."/>
            <person name="Khouri H.M."/>
            <person name="Mulligan S."/>
            <person name="Carty H.A."/>
            <person name="Cline R.T."/>
            <person name="Van Aken S.E."/>
            <person name="Gill J."/>
            <person name="Scarselli M."/>
            <person name="Mora M."/>
            <person name="Iacobini E.T."/>
            <person name="Brettoni C."/>
            <person name="Galli G."/>
            <person name="Mariani M."/>
            <person name="Vegni F."/>
            <person name="Maione D."/>
            <person name="Rinaudo D."/>
            <person name="Rappuoli R."/>
            <person name="Telford J.L."/>
            <person name="Kasper D.L."/>
            <person name="Grandi G."/>
            <person name="Fraser C.M."/>
        </authorList>
    </citation>
    <scope>NUCLEOTIDE SEQUENCE [LARGE SCALE GENOMIC DNA]</scope>
    <source>
        <strain>ATCC BAA-611 / 2603 V/R</strain>
    </source>
</reference>
<accession>Q8E177</accession>
<keyword id="KW-0030">Aminoacyl-tRNA synthetase</keyword>
<keyword id="KW-0067">ATP-binding</keyword>
<keyword id="KW-0963">Cytoplasm</keyword>
<keyword id="KW-0436">Ligase</keyword>
<keyword id="KW-0547">Nucleotide-binding</keyword>
<keyword id="KW-0648">Protein biosynthesis</keyword>
<keyword id="KW-1185">Reference proteome</keyword>
<name>SYI_STRA5</name>
<evidence type="ECO:0000255" key="1">
    <source>
        <dbReference type="HAMAP-Rule" id="MF_02002"/>
    </source>
</evidence>